<organism>
    <name type="scientific">Dehalococcoides mccartyi (strain ATCC BAA-2100 / JCM 16839 / KCTC 5957 / BAV1)</name>
    <dbReference type="NCBI Taxonomy" id="216389"/>
    <lineage>
        <taxon>Bacteria</taxon>
        <taxon>Bacillati</taxon>
        <taxon>Chloroflexota</taxon>
        <taxon>Dehalococcoidia</taxon>
        <taxon>Dehalococcoidales</taxon>
        <taxon>Dehalococcoidaceae</taxon>
        <taxon>Dehalococcoides</taxon>
    </lineage>
</organism>
<accession>A5FPL0</accession>
<keyword id="KW-1003">Cell membrane</keyword>
<keyword id="KW-0407">Ion channel</keyword>
<keyword id="KW-0406">Ion transport</keyword>
<keyword id="KW-0472">Membrane</keyword>
<keyword id="KW-0479">Metal-binding</keyword>
<keyword id="KW-0915">Sodium</keyword>
<keyword id="KW-0812">Transmembrane</keyword>
<keyword id="KW-1133">Transmembrane helix</keyword>
<keyword id="KW-0813">Transport</keyword>
<feature type="chain" id="PRO_1000081011" description="Fluoride-specific ion channel FluC">
    <location>
        <begin position="1"/>
        <end position="130"/>
    </location>
</feature>
<feature type="transmembrane region" description="Helical" evidence="1">
    <location>
        <begin position="1"/>
        <end position="21"/>
    </location>
</feature>
<feature type="transmembrane region" description="Helical" evidence="1">
    <location>
        <begin position="36"/>
        <end position="56"/>
    </location>
</feature>
<feature type="transmembrane region" description="Helical" evidence="1">
    <location>
        <begin position="65"/>
        <end position="85"/>
    </location>
</feature>
<feature type="transmembrane region" description="Helical" evidence="1">
    <location>
        <begin position="103"/>
        <end position="123"/>
    </location>
</feature>
<feature type="binding site" evidence="1">
    <location>
        <position position="75"/>
    </location>
    <ligand>
        <name>Na(+)</name>
        <dbReference type="ChEBI" id="CHEBI:29101"/>
        <note>structural</note>
    </ligand>
</feature>
<feature type="binding site" evidence="1">
    <location>
        <position position="78"/>
    </location>
    <ligand>
        <name>Na(+)</name>
        <dbReference type="ChEBI" id="CHEBI:29101"/>
        <note>structural</note>
    </ligand>
</feature>
<sequence length="130" mass="13915">MGEILLLAAGGALGAVSRYGLNNLTVKLLGDSFPYGTLIVNCLGCFVLGFLMQWGFSSDSHNTHLKLMLTAGFLGAFTTFSTFSYETLDCFKNGDYFNGFSNILANVLLGLLMVFIGAYLGSLLKQNSGT</sequence>
<reference key="1">
    <citation type="submission" date="2007-05" db="EMBL/GenBank/DDBJ databases">
        <title>Complete sequence of Dehalococcoides sp. BAV1.</title>
        <authorList>
            <consortium name="US DOE Joint Genome Institute"/>
            <person name="Copeland A."/>
            <person name="Lucas S."/>
            <person name="Lapidus A."/>
            <person name="Barry K."/>
            <person name="Detter J.C."/>
            <person name="Glavina del Rio T."/>
            <person name="Hammon N."/>
            <person name="Israni S."/>
            <person name="Pitluck S."/>
            <person name="Lowry S."/>
            <person name="Clum A."/>
            <person name="Schmutz J."/>
            <person name="Larimer F."/>
            <person name="Land M."/>
            <person name="Hauser L."/>
            <person name="Kyrpides N."/>
            <person name="Kim E."/>
            <person name="Ritalahti K.M."/>
            <person name="Loeffler F."/>
            <person name="Richardson P."/>
        </authorList>
    </citation>
    <scope>NUCLEOTIDE SEQUENCE [LARGE SCALE GENOMIC DNA]</scope>
    <source>
        <strain>ATCC BAA-2100 / JCM 16839 / KCTC 5957 / BAV1</strain>
    </source>
</reference>
<protein>
    <recommendedName>
        <fullName evidence="1">Fluoride-specific ion channel FluC</fullName>
    </recommendedName>
</protein>
<evidence type="ECO:0000255" key="1">
    <source>
        <dbReference type="HAMAP-Rule" id="MF_00454"/>
    </source>
</evidence>
<dbReference type="EMBL" id="CP000688">
    <property type="protein sequence ID" value="ABQ17867.1"/>
    <property type="molecule type" value="Genomic_DNA"/>
</dbReference>
<dbReference type="SMR" id="A5FPL0"/>
<dbReference type="KEGG" id="deb:DehaBAV1_1288"/>
<dbReference type="PATRIC" id="fig|216389.18.peg.1357"/>
<dbReference type="HOGENOM" id="CLU_114342_3_0_0"/>
<dbReference type="GO" id="GO:0005886">
    <property type="term" value="C:plasma membrane"/>
    <property type="evidence" value="ECO:0007669"/>
    <property type="project" value="UniProtKB-SubCell"/>
</dbReference>
<dbReference type="GO" id="GO:0062054">
    <property type="term" value="F:fluoride channel activity"/>
    <property type="evidence" value="ECO:0007669"/>
    <property type="project" value="UniProtKB-UniRule"/>
</dbReference>
<dbReference type="GO" id="GO:0046872">
    <property type="term" value="F:metal ion binding"/>
    <property type="evidence" value="ECO:0007669"/>
    <property type="project" value="UniProtKB-KW"/>
</dbReference>
<dbReference type="GO" id="GO:0140114">
    <property type="term" value="P:cellular detoxification of fluoride"/>
    <property type="evidence" value="ECO:0007669"/>
    <property type="project" value="UniProtKB-UniRule"/>
</dbReference>
<dbReference type="HAMAP" id="MF_00454">
    <property type="entry name" value="FluC"/>
    <property type="match status" value="1"/>
</dbReference>
<dbReference type="InterPro" id="IPR003691">
    <property type="entry name" value="FluC"/>
</dbReference>
<dbReference type="NCBIfam" id="TIGR00494">
    <property type="entry name" value="crcB"/>
    <property type="match status" value="1"/>
</dbReference>
<dbReference type="PANTHER" id="PTHR28259">
    <property type="entry name" value="FLUORIDE EXPORT PROTEIN 1-RELATED"/>
    <property type="match status" value="1"/>
</dbReference>
<dbReference type="PANTHER" id="PTHR28259:SF1">
    <property type="entry name" value="FLUORIDE EXPORT PROTEIN 1-RELATED"/>
    <property type="match status" value="1"/>
</dbReference>
<dbReference type="Pfam" id="PF02537">
    <property type="entry name" value="CRCB"/>
    <property type="match status" value="1"/>
</dbReference>
<proteinExistence type="inferred from homology"/>
<gene>
    <name evidence="1" type="primary">fluC</name>
    <name evidence="1" type="synonym">crcB</name>
    <name type="ordered locus">DehaBAV1_1288</name>
</gene>
<name>FLUC_DEHMB</name>
<comment type="function">
    <text evidence="1">Fluoride-specific ion channel. Important for reducing fluoride concentration in the cell, thus reducing its toxicity.</text>
</comment>
<comment type="catalytic activity">
    <reaction evidence="1">
        <text>fluoride(in) = fluoride(out)</text>
        <dbReference type="Rhea" id="RHEA:76159"/>
        <dbReference type="ChEBI" id="CHEBI:17051"/>
    </reaction>
    <physiologicalReaction direction="left-to-right" evidence="1">
        <dbReference type="Rhea" id="RHEA:76160"/>
    </physiologicalReaction>
</comment>
<comment type="activity regulation">
    <text evidence="1">Na(+) is not transported, but it plays an essential structural role and its presence is essential for fluoride channel function.</text>
</comment>
<comment type="subcellular location">
    <subcellularLocation>
        <location evidence="1">Cell membrane</location>
        <topology evidence="1">Multi-pass membrane protein</topology>
    </subcellularLocation>
</comment>
<comment type="similarity">
    <text evidence="1">Belongs to the fluoride channel Fluc/FEX (TC 1.A.43) family.</text>
</comment>